<reference key="1">
    <citation type="journal article" date="2008" name="DNA Res.">
        <title>Complete genome sequence and comparative analysis of the wild-type commensal Escherichia coli strain SE11 isolated from a healthy adult.</title>
        <authorList>
            <person name="Oshima K."/>
            <person name="Toh H."/>
            <person name="Ogura Y."/>
            <person name="Sasamoto H."/>
            <person name="Morita H."/>
            <person name="Park S.-H."/>
            <person name="Ooka T."/>
            <person name="Iyoda S."/>
            <person name="Taylor T.D."/>
            <person name="Hayashi T."/>
            <person name="Itoh K."/>
            <person name="Hattori M."/>
        </authorList>
    </citation>
    <scope>NUCLEOTIDE SEQUENCE [LARGE SCALE GENOMIC DNA]</scope>
    <source>
        <strain>SE11</strain>
    </source>
</reference>
<comment type="function">
    <text evidence="1">Converts 2C-methyl-D-erythritol 2,4-cyclodiphosphate (ME-2,4cPP) into 1-hydroxy-2-methyl-2-(E)-butenyl 4-diphosphate.</text>
</comment>
<comment type="catalytic activity">
    <reaction evidence="1">
        <text>(2E)-4-hydroxy-3-methylbut-2-enyl diphosphate + oxidized [flavodoxin] + H2O + 2 H(+) = 2-C-methyl-D-erythritol 2,4-cyclic diphosphate + reduced [flavodoxin]</text>
        <dbReference type="Rhea" id="RHEA:43604"/>
        <dbReference type="Rhea" id="RHEA-COMP:10622"/>
        <dbReference type="Rhea" id="RHEA-COMP:10623"/>
        <dbReference type="ChEBI" id="CHEBI:15377"/>
        <dbReference type="ChEBI" id="CHEBI:15378"/>
        <dbReference type="ChEBI" id="CHEBI:57618"/>
        <dbReference type="ChEBI" id="CHEBI:58210"/>
        <dbReference type="ChEBI" id="CHEBI:58483"/>
        <dbReference type="ChEBI" id="CHEBI:128753"/>
        <dbReference type="EC" id="1.17.7.3"/>
    </reaction>
</comment>
<comment type="cofactor">
    <cofactor evidence="1">
        <name>[4Fe-4S] cluster</name>
        <dbReference type="ChEBI" id="CHEBI:49883"/>
    </cofactor>
    <text evidence="1">Binds 1 [4Fe-4S] cluster.</text>
</comment>
<comment type="pathway">
    <text evidence="1">Isoprenoid biosynthesis; isopentenyl diphosphate biosynthesis via DXP pathway; isopentenyl diphosphate from 1-deoxy-D-xylulose 5-phosphate: step 5/6.</text>
</comment>
<comment type="similarity">
    <text evidence="1">Belongs to the IspG family.</text>
</comment>
<proteinExistence type="inferred from homology"/>
<organism>
    <name type="scientific">Escherichia coli (strain SE11)</name>
    <dbReference type="NCBI Taxonomy" id="409438"/>
    <lineage>
        <taxon>Bacteria</taxon>
        <taxon>Pseudomonadati</taxon>
        <taxon>Pseudomonadota</taxon>
        <taxon>Gammaproteobacteria</taxon>
        <taxon>Enterobacterales</taxon>
        <taxon>Enterobacteriaceae</taxon>
        <taxon>Escherichia</taxon>
    </lineage>
</organism>
<name>ISPG_ECOSE</name>
<dbReference type="EC" id="1.17.7.3" evidence="1"/>
<dbReference type="EMBL" id="AP009240">
    <property type="protein sequence ID" value="BAG78325.1"/>
    <property type="molecule type" value="Genomic_DNA"/>
</dbReference>
<dbReference type="RefSeq" id="WP_000551807.1">
    <property type="nucleotide sequence ID" value="NC_011415.1"/>
</dbReference>
<dbReference type="SMR" id="B6I587"/>
<dbReference type="GeneID" id="86947404"/>
<dbReference type="KEGG" id="ecy:ECSE_2801"/>
<dbReference type="HOGENOM" id="CLU_042258_0_0_6"/>
<dbReference type="UniPathway" id="UPA00056">
    <property type="reaction ID" value="UER00096"/>
</dbReference>
<dbReference type="Proteomes" id="UP000008199">
    <property type="component" value="Chromosome"/>
</dbReference>
<dbReference type="GO" id="GO:0051539">
    <property type="term" value="F:4 iron, 4 sulfur cluster binding"/>
    <property type="evidence" value="ECO:0007669"/>
    <property type="project" value="UniProtKB-UniRule"/>
</dbReference>
<dbReference type="GO" id="GO:0046429">
    <property type="term" value="F:4-hydroxy-3-methylbut-2-en-1-yl diphosphate synthase activity (ferredoxin)"/>
    <property type="evidence" value="ECO:0007669"/>
    <property type="project" value="UniProtKB-UniRule"/>
</dbReference>
<dbReference type="GO" id="GO:0141197">
    <property type="term" value="F:4-hydroxy-3-methylbut-2-enyl-diphosphate synthase activity (flavodoxin)"/>
    <property type="evidence" value="ECO:0007669"/>
    <property type="project" value="UniProtKB-EC"/>
</dbReference>
<dbReference type="GO" id="GO:0005506">
    <property type="term" value="F:iron ion binding"/>
    <property type="evidence" value="ECO:0007669"/>
    <property type="project" value="InterPro"/>
</dbReference>
<dbReference type="GO" id="GO:0019288">
    <property type="term" value="P:isopentenyl diphosphate biosynthetic process, methylerythritol 4-phosphate pathway"/>
    <property type="evidence" value="ECO:0007669"/>
    <property type="project" value="UniProtKB-UniRule"/>
</dbReference>
<dbReference type="GO" id="GO:0016114">
    <property type="term" value="P:terpenoid biosynthetic process"/>
    <property type="evidence" value="ECO:0007669"/>
    <property type="project" value="InterPro"/>
</dbReference>
<dbReference type="FunFam" id="3.20.20.20:FF:000001">
    <property type="entry name" value="4-hydroxy-3-methylbut-2-en-1-yl diphosphate synthase (flavodoxin)"/>
    <property type="match status" value="1"/>
</dbReference>
<dbReference type="FunFam" id="3.30.413.10:FF:000002">
    <property type="entry name" value="4-hydroxy-3-methylbut-2-en-1-yl diphosphate synthase (flavodoxin)"/>
    <property type="match status" value="1"/>
</dbReference>
<dbReference type="Gene3D" id="3.20.20.20">
    <property type="entry name" value="Dihydropteroate synthase-like"/>
    <property type="match status" value="1"/>
</dbReference>
<dbReference type="Gene3D" id="3.30.413.10">
    <property type="entry name" value="Sulfite Reductase Hemoprotein, domain 1"/>
    <property type="match status" value="1"/>
</dbReference>
<dbReference type="HAMAP" id="MF_00159">
    <property type="entry name" value="IspG"/>
    <property type="match status" value="1"/>
</dbReference>
<dbReference type="InterPro" id="IPR011005">
    <property type="entry name" value="Dihydropteroate_synth-like_sf"/>
</dbReference>
<dbReference type="InterPro" id="IPR016425">
    <property type="entry name" value="IspG_bac"/>
</dbReference>
<dbReference type="InterPro" id="IPR004588">
    <property type="entry name" value="IspG_bac-typ"/>
</dbReference>
<dbReference type="InterPro" id="IPR045854">
    <property type="entry name" value="NO2/SO3_Rdtase_4Fe4S_sf"/>
</dbReference>
<dbReference type="NCBIfam" id="TIGR00612">
    <property type="entry name" value="ispG_gcpE"/>
    <property type="match status" value="1"/>
</dbReference>
<dbReference type="NCBIfam" id="NF001540">
    <property type="entry name" value="PRK00366.1"/>
    <property type="match status" value="1"/>
</dbReference>
<dbReference type="PANTHER" id="PTHR30454">
    <property type="entry name" value="4-HYDROXY-3-METHYLBUT-2-EN-1-YL DIPHOSPHATE SYNTHASE"/>
    <property type="match status" value="1"/>
</dbReference>
<dbReference type="PANTHER" id="PTHR30454:SF0">
    <property type="entry name" value="4-HYDROXY-3-METHYLBUT-2-EN-1-YL DIPHOSPHATE SYNTHASE (FERREDOXIN), CHLOROPLASTIC"/>
    <property type="match status" value="1"/>
</dbReference>
<dbReference type="Pfam" id="PF04551">
    <property type="entry name" value="GcpE"/>
    <property type="match status" value="1"/>
</dbReference>
<dbReference type="PIRSF" id="PIRSF004640">
    <property type="entry name" value="IspG"/>
    <property type="match status" value="1"/>
</dbReference>
<dbReference type="SUPFAM" id="SSF51717">
    <property type="entry name" value="Dihydropteroate synthetase-like"/>
    <property type="match status" value="1"/>
</dbReference>
<dbReference type="SUPFAM" id="SSF56014">
    <property type="entry name" value="Nitrite and sulphite reductase 4Fe-4S domain-like"/>
    <property type="match status" value="1"/>
</dbReference>
<protein>
    <recommendedName>
        <fullName evidence="1">4-hydroxy-3-methylbut-2-en-1-yl diphosphate synthase (flavodoxin)</fullName>
        <ecNumber evidence="1">1.17.7.3</ecNumber>
    </recommendedName>
    <alternativeName>
        <fullName evidence="1">1-hydroxy-2-methyl-2-(E)-butenyl 4-diphosphate synthase</fullName>
    </alternativeName>
</protein>
<sequence length="372" mass="40684">MHNQAPIQRRKSTRIYVGNVPIGDGAPIAVQSMTNTRTTDVEATVNQIKALERVGADIVRVSVPTMDAAEAFKLIKQQVNVPLVADIHFDYRIALKVAEYGVDCLRINPGNIGNEERIRMVVDCARDKNIPIRIGVNAGSLEKDLQEKYGEPTPQALLESAMRHVDHLDRLNFDQFKVSVKASDVFLAVESYRLLAKQIDQPLHLGITEAGGARSGAVKSAIGLGLLLSEGIGDTLRVSLAADPVEEIKVGFDILKSLRIRSRGINFIACPTCSRQEFDVIGTVNALEQRLEDIITPMDVSIIGCVVNGPGEALVSTLGVTGGNKKSGLYEDGVRKDRLDNNDMIDQLEARIRAKASQLDEARRIDVQQVEK</sequence>
<keyword id="KW-0004">4Fe-4S</keyword>
<keyword id="KW-0408">Iron</keyword>
<keyword id="KW-0411">Iron-sulfur</keyword>
<keyword id="KW-0414">Isoprene biosynthesis</keyword>
<keyword id="KW-0479">Metal-binding</keyword>
<keyword id="KW-0560">Oxidoreductase</keyword>
<feature type="chain" id="PRO_1000097159" description="4-hydroxy-3-methylbut-2-en-1-yl diphosphate synthase (flavodoxin)">
    <location>
        <begin position="1"/>
        <end position="372"/>
    </location>
</feature>
<feature type="binding site" evidence="1">
    <location>
        <position position="270"/>
    </location>
    <ligand>
        <name>[4Fe-4S] cluster</name>
        <dbReference type="ChEBI" id="CHEBI:49883"/>
    </ligand>
</feature>
<feature type="binding site" evidence="1">
    <location>
        <position position="273"/>
    </location>
    <ligand>
        <name>[4Fe-4S] cluster</name>
        <dbReference type="ChEBI" id="CHEBI:49883"/>
    </ligand>
</feature>
<feature type="binding site" evidence="1">
    <location>
        <position position="305"/>
    </location>
    <ligand>
        <name>[4Fe-4S] cluster</name>
        <dbReference type="ChEBI" id="CHEBI:49883"/>
    </ligand>
</feature>
<feature type="binding site" evidence="1">
    <location>
        <position position="312"/>
    </location>
    <ligand>
        <name>[4Fe-4S] cluster</name>
        <dbReference type="ChEBI" id="CHEBI:49883"/>
    </ligand>
</feature>
<evidence type="ECO:0000255" key="1">
    <source>
        <dbReference type="HAMAP-Rule" id="MF_00159"/>
    </source>
</evidence>
<gene>
    <name evidence="1" type="primary">ispG</name>
    <name type="ordered locus">ECSE_2801</name>
</gene>
<accession>B6I587</accession>